<gene>
    <name type="primary">ARG2</name>
    <name type="ordered locus">CNBC2740</name>
</gene>
<keyword id="KW-0012">Acyltransferase</keyword>
<keyword id="KW-0028">Amino-acid biosynthesis</keyword>
<keyword id="KW-0496">Mitochondrion</keyword>
<keyword id="KW-0808">Transferase</keyword>
<keyword id="KW-0809">Transit peptide</keyword>
<evidence type="ECO:0000250" key="1"/>
<evidence type="ECO:0000255" key="2"/>
<evidence type="ECO:0000255" key="3">
    <source>
        <dbReference type="PROSITE-ProRule" id="PRU00532"/>
    </source>
</evidence>
<evidence type="ECO:0000256" key="4">
    <source>
        <dbReference type="SAM" id="MobiDB-lite"/>
    </source>
</evidence>
<evidence type="ECO:0000305" key="5"/>
<reference key="1">
    <citation type="journal article" date="2005" name="Science">
        <title>The genome of the basidiomycetous yeast and human pathogen Cryptococcus neoformans.</title>
        <authorList>
            <person name="Loftus B.J."/>
            <person name="Fung E."/>
            <person name="Roncaglia P."/>
            <person name="Rowley D."/>
            <person name="Amedeo P."/>
            <person name="Bruno D."/>
            <person name="Vamathevan J."/>
            <person name="Miranda M."/>
            <person name="Anderson I.J."/>
            <person name="Fraser J.A."/>
            <person name="Allen J.E."/>
            <person name="Bosdet I.E."/>
            <person name="Brent M.R."/>
            <person name="Chiu R."/>
            <person name="Doering T.L."/>
            <person name="Donlin M.J."/>
            <person name="D'Souza C.A."/>
            <person name="Fox D.S."/>
            <person name="Grinberg V."/>
            <person name="Fu J."/>
            <person name="Fukushima M."/>
            <person name="Haas B.J."/>
            <person name="Huang J.C."/>
            <person name="Janbon G."/>
            <person name="Jones S.J.M."/>
            <person name="Koo H.L."/>
            <person name="Krzywinski M.I."/>
            <person name="Kwon-Chung K.J."/>
            <person name="Lengeler K.B."/>
            <person name="Maiti R."/>
            <person name="Marra M.A."/>
            <person name="Marra R.E."/>
            <person name="Mathewson C.A."/>
            <person name="Mitchell T.G."/>
            <person name="Pertea M."/>
            <person name="Riggs F.R."/>
            <person name="Salzberg S.L."/>
            <person name="Schein J.E."/>
            <person name="Shvartsbeyn A."/>
            <person name="Shin H."/>
            <person name="Shumway M."/>
            <person name="Specht C.A."/>
            <person name="Suh B.B."/>
            <person name="Tenney A."/>
            <person name="Utterback T.R."/>
            <person name="Wickes B.L."/>
            <person name="Wortman J.R."/>
            <person name="Wye N.H."/>
            <person name="Kronstad J.W."/>
            <person name="Lodge J.K."/>
            <person name="Heitman J."/>
            <person name="Davis R.W."/>
            <person name="Fraser C.M."/>
            <person name="Hyman R.W."/>
        </authorList>
    </citation>
    <scope>NUCLEOTIDE SEQUENCE [LARGE SCALE GENOMIC DNA]</scope>
    <source>
        <strain>B-3501A</strain>
    </source>
</reference>
<comment type="function">
    <text evidence="1">N-acetylglutamate synthase involved in arginine biosynthesis.</text>
</comment>
<comment type="catalytic activity">
    <reaction>
        <text>L-glutamate + acetyl-CoA = N-acetyl-L-glutamate + CoA + H(+)</text>
        <dbReference type="Rhea" id="RHEA:24292"/>
        <dbReference type="ChEBI" id="CHEBI:15378"/>
        <dbReference type="ChEBI" id="CHEBI:29985"/>
        <dbReference type="ChEBI" id="CHEBI:44337"/>
        <dbReference type="ChEBI" id="CHEBI:57287"/>
        <dbReference type="ChEBI" id="CHEBI:57288"/>
        <dbReference type="EC" id="2.3.1.1"/>
    </reaction>
</comment>
<comment type="pathway">
    <text>Amino-acid biosynthesis; L-arginine biosynthesis; N(2)-acetyl-L-ornithine from L-glutamate: step 1/4.</text>
</comment>
<comment type="subcellular location">
    <subcellularLocation>
        <location evidence="1">Mitochondrion</location>
    </subcellularLocation>
</comment>
<comment type="similarity">
    <text evidence="5">Belongs to the acetyltransferase family.</text>
</comment>
<protein>
    <recommendedName>
        <fullName>Amino-acid acetyltransferase, mitochondrial</fullName>
        <ecNumber>2.3.1.1</ecNumber>
    </recommendedName>
    <alternativeName>
        <fullName>Arginine-requiring protein 2</fullName>
    </alternativeName>
    <alternativeName>
        <fullName>Glutamate N-acetyltransferase</fullName>
    </alternativeName>
    <alternativeName>
        <fullName>N-acetylglutamate synthase</fullName>
        <shortName>AGS</shortName>
        <shortName>NAGS</shortName>
    </alternativeName>
</protein>
<dbReference type="EC" id="2.3.1.1"/>
<dbReference type="EMBL" id="AAEY01000013">
    <property type="protein sequence ID" value="EAL22136.1"/>
    <property type="molecule type" value="Genomic_DNA"/>
</dbReference>
<dbReference type="RefSeq" id="XP_776783.1">
    <property type="nucleotide sequence ID" value="XM_771690.1"/>
</dbReference>
<dbReference type="SMR" id="P0CM19"/>
<dbReference type="GeneID" id="4934939"/>
<dbReference type="KEGG" id="cnb:CNBC2740"/>
<dbReference type="VEuPathDB" id="FungiDB:CNBC2740"/>
<dbReference type="HOGENOM" id="CLU_013088_1_0_1"/>
<dbReference type="OrthoDB" id="3951at5206"/>
<dbReference type="UniPathway" id="UPA00068">
    <property type="reaction ID" value="UER00106"/>
</dbReference>
<dbReference type="GO" id="GO:0005759">
    <property type="term" value="C:mitochondrial matrix"/>
    <property type="evidence" value="ECO:0007669"/>
    <property type="project" value="TreeGrafter"/>
</dbReference>
<dbReference type="GO" id="GO:0004042">
    <property type="term" value="F:L-glutamate N-acetyltransferase activity"/>
    <property type="evidence" value="ECO:0007669"/>
    <property type="project" value="RHEA"/>
</dbReference>
<dbReference type="GO" id="GO:0006526">
    <property type="term" value="P:L-arginine biosynthetic process"/>
    <property type="evidence" value="ECO:0007669"/>
    <property type="project" value="UniProtKB-UniPathway"/>
</dbReference>
<dbReference type="GO" id="GO:0006592">
    <property type="term" value="P:ornithine biosynthetic process"/>
    <property type="evidence" value="ECO:0007669"/>
    <property type="project" value="TreeGrafter"/>
</dbReference>
<dbReference type="CDD" id="cd04266">
    <property type="entry name" value="DUF619-NAGS-FABP"/>
    <property type="match status" value="1"/>
</dbReference>
<dbReference type="FunFam" id="3.40.630.30:FF:000070">
    <property type="entry name" value="Acetylglutamate kinase"/>
    <property type="match status" value="1"/>
</dbReference>
<dbReference type="Gene3D" id="3.40.630.30">
    <property type="match status" value="1"/>
</dbReference>
<dbReference type="Gene3D" id="3.40.1160.10">
    <property type="entry name" value="Acetylglutamate kinase-like"/>
    <property type="match status" value="1"/>
</dbReference>
<dbReference type="InterPro" id="IPR036393">
    <property type="entry name" value="AceGlu_kinase-like_sf"/>
</dbReference>
<dbReference type="InterPro" id="IPR016181">
    <property type="entry name" value="Acyl_CoA_acyltransferase"/>
</dbReference>
<dbReference type="InterPro" id="IPR000182">
    <property type="entry name" value="GNAT_dom"/>
</dbReference>
<dbReference type="InterPro" id="IPR006855">
    <property type="entry name" value="Vertebrate-like_GNAT_dom"/>
</dbReference>
<dbReference type="PANTHER" id="PTHR23342:SF4">
    <property type="entry name" value="AMINO-ACID ACETYLTRANSFERASE, MITOCHONDRIAL"/>
    <property type="match status" value="1"/>
</dbReference>
<dbReference type="PANTHER" id="PTHR23342">
    <property type="entry name" value="N-ACETYLGLUTAMATE SYNTHASE"/>
    <property type="match status" value="1"/>
</dbReference>
<dbReference type="Pfam" id="PF04768">
    <property type="entry name" value="NAT"/>
    <property type="match status" value="2"/>
</dbReference>
<dbReference type="SUPFAM" id="SSF55729">
    <property type="entry name" value="Acyl-CoA N-acyltransferases (Nat)"/>
    <property type="match status" value="1"/>
</dbReference>
<dbReference type="PROSITE" id="PS51731">
    <property type="entry name" value="GNAT_NAGS"/>
    <property type="match status" value="1"/>
</dbReference>
<organism>
    <name type="scientific">Cryptococcus neoformans var. neoformans serotype D (strain B-3501A)</name>
    <name type="common">Filobasidiella neoformans</name>
    <dbReference type="NCBI Taxonomy" id="283643"/>
    <lineage>
        <taxon>Eukaryota</taxon>
        <taxon>Fungi</taxon>
        <taxon>Dikarya</taxon>
        <taxon>Basidiomycota</taxon>
        <taxon>Agaricomycotina</taxon>
        <taxon>Tremellomycetes</taxon>
        <taxon>Tremellales</taxon>
        <taxon>Cryptococcaceae</taxon>
        <taxon>Cryptococcus</taxon>
        <taxon>Cryptococcus neoformans species complex</taxon>
    </lineage>
</organism>
<feature type="transit peptide" description="Mitochondrion" evidence="2">
    <location>
        <begin position="1"/>
        <end status="unknown"/>
    </location>
</feature>
<feature type="chain" id="PRO_0000410010" description="Amino-acid acetyltransferase, mitochondrial">
    <location>
        <begin status="unknown"/>
        <end position="565"/>
    </location>
</feature>
<feature type="domain" description="N-acetyltransferase" evidence="3">
    <location>
        <begin position="352"/>
        <end position="540"/>
    </location>
</feature>
<feature type="region of interest" description="Disordered" evidence="4">
    <location>
        <begin position="38"/>
        <end position="58"/>
    </location>
</feature>
<name>NAGS_CRYNB</name>
<accession>P0CM19</accession>
<accession>Q55W63</accession>
<accession>Q5KK32</accession>
<proteinExistence type="inferred from homology"/>
<sequence>MLTGSSGKAFILSILQASPSARDSRSYLSSFAPPQPVDIATATPAATPSDGAQPPAQNPLVNALLNPILRRPALVKIQGPFTDAQLESICRGMAHLQKLGLVSVIVVDRDDLPSTESSDRYEAQRQRAIVRHEVERVVHFLSRHRAAARPVFSTVARIADPELEPEEAQKGVFVEEEGLDHVRRAVGEGEIPVLLPVALDSGCRSRRIPANRVLLALASAMSTHTSSPVDLTPRRLLVINREGGIPSYARQGLPHLYINLASEFSYINRTFQPQWNDSHPTALSNLFLANGCLAHMPREASALIVSHRSPAALIANLITNKPAHSASLPHALLVESEGRITRDTPTLIRKGLPVRVLRSMEEVDQDKLTHLLETSFKRTLDREGFYNRLKNDLDFVIVIGDYAGAAVCTLEGKPVSDSFAYPPNHPEPICYLDKFAVHPSHQGDGTVDFLWVALRDETYGLGQLDASNPSIGSLRGVGRGRDLVWRSRSDNPVNKWYYERSSGFLKTRDEKWKVFWCDAEQRLGEIWREREFGGGRLVRVVEKEEKGRVKWWEEVIGAIPSAWSA</sequence>